<sequence length="1849" mass="212911">MTKIVMLDYIPMLNNGGHRHPADIKPSMINSLLDSMSIILTSLCTFCEQLSLNEAIIVNLGINTLDQLLMSQAGRYLLLYYCIYALELYTVCYSTLSLILLYLIQLNYILLTNIVGYLQYSCSEIANLVYTYILLEGLLDVSELDALVVETLLDYLWVPCDLIIRYYRAYWYFEGVYFNLNIPYVQRSAYWLCVVIWNNIGWWTYQLMIIGWYSLSCLCIRLVPTILAIINLILTYIDLIIYLYDIYSNYSNMTWLGILYSTINSIIRYDISRIHAYQHLLTVIIPNYCLAIYNSGLILSSLLLDIYHYQIGLTILALQYLVAPLYISCSLLIYILCYIMTELLYSRSFYIDLLLRLLEIIYLDILVNSLISIIILILSVDVAYLIQLQVIILSQYINIISGYVAMPTTILITWYLYNIAVYIYYLVDYIATISTLIIWLLERILWVYGICANNIEPVVIDLPQLTLTSLDALLNQLLSEWCLLDAIMNVVTSVILLITVSCLGVLRIILFIAVYPVYCIGVLLLNTLLQVVVGLISYIIGTFMNAIILICDIYVYSIHRPFLPLIMYVYFVAAIILEPIIDIIHTIILAEHALFNTYCYIIFDILQPLHLQAFEFYRDLIWLIADLILAYIDLIRSTLVEGIISFIKWRLEQDFQLVYDICEFYLDEVKPRIIRYWNIYSRWVRFLIYCAGNNINLLVLLYVQFKGYTLPMIILFDLTRIQLYATIPVIISSYIYQGILQTMLIISYYNTLLVATLEFIQIWLTILSVSPEMLYTSTLGILLRSYYLLYEILLLEPTWVLFECLSTCVGLVELYLVTVETTVSNILIIDLILMEVLLEDIRQVATILTCILDWYILETCLDMQYADILLLMSSGLQSTVLNTIFDLLSLLGLLDETSIRFILELTVQVCTIPAALYSTIIYPYIVLVTRCLLYLPDVVQLYLTIGEYLLRETLYQLLIDWASCKLYSYNLYLLELYNIYYFWLSLLEKYWTFTYHIYNYTTLVELSPDLLISLISYIIDICILSLELLLEDIRWGSTIFVNLLDWYLLDTQLNIQYIDILLITSYSVQNTLLTVVFYILNLCGILNEISIQILFEITVQICTILATIYCTVVLPYILIILEILSYLPEIVQLYLDIGEHLLLEILWQLLIDLLYYRAYDYILIAQLLCKVTYLLYIVLEQLLLVIIDLYIYIIGDLLIIGSCHVGNHIIDILCSAENVYFLYFMIFIGYLLCGIFAFFYHGYLGTRGIFYLSEMIIMGILIFSIVTLYYNLKYHLALDIILGELALSNEVIFTNIITFDILSILGVLLVATLTAIILTFGVEYMLREAFAYNVLATLVLFSASIICFIVSYSFGLMIIFWEISGTLSLFLIDMYYARIRTTQAVTRTFALNRFGDLWMFTASIEIYSLCHNDALPTLFALLPYAQFNLSILGNLIFDFTIPTVIVFSIFSAAACKCAQFLLFVWLPDAMEAPTPASALIHSSTLVVMGIFMILRFAPILHLSVYTLYIMSILGSLTVAYGAILATQTSDLKKAVAYSTISQIGYLFTGCAFLAFRATLIYLILHAICKALLFVLVGYIVHMFGGTTSLRRMGGIYYIVPDIAIYMFILCMVLAGAPYTVGFFAKELIVTTLTNTSSPVATFIICCWIISFACTPFYLYRICVLPLFGRPRCSRRVFRNIVSPQSTYNFIDSDSSLNSLLHKFTNLITRWSVQGRFTNLLHLLLLLIVLFCGEFLVFLVTGLFGTSTTLFSDTAIDDSVYQLTDYYLLSYYRVRNIQLLIIVLFALVTLYITAINNQLTFNIIYLSVVLPILAIIFICLGHYFLVDFTVYIYNISNSLIFELLCDLAIC</sequence>
<geneLocation type="hydrogenosome"/>
<proteinExistence type="inferred from homology"/>
<comment type="catalytic activity">
    <reaction>
        <text>a ubiquinone + NADH + 5 H(+)(in) = a ubiquinol + NAD(+) + 4 H(+)(out)</text>
        <dbReference type="Rhea" id="RHEA:29091"/>
        <dbReference type="Rhea" id="RHEA-COMP:9565"/>
        <dbReference type="Rhea" id="RHEA-COMP:9566"/>
        <dbReference type="ChEBI" id="CHEBI:15378"/>
        <dbReference type="ChEBI" id="CHEBI:16389"/>
        <dbReference type="ChEBI" id="CHEBI:17976"/>
        <dbReference type="ChEBI" id="CHEBI:57540"/>
        <dbReference type="ChEBI" id="CHEBI:57945"/>
        <dbReference type="EC" id="7.1.1.2"/>
    </reaction>
</comment>
<comment type="subcellular location">
    <subcellularLocation>
        <location evidence="2">Hydrogenosome membrane</location>
        <topology evidence="2">Multi-pass membrane protein</topology>
    </subcellularLocation>
</comment>
<comment type="similarity">
    <text evidence="2">Belongs to the complex I subunit 5 family.</text>
</comment>
<reference key="1">
    <citation type="journal article" date="2005" name="Nature">
        <title>An anaerobic mitochondrion that produces hydrogen.</title>
        <authorList>
            <person name="Boxma B."/>
            <person name="de Graaf R.M."/>
            <person name="van der Staay G.W.M."/>
            <person name="van Alen T.A."/>
            <person name="Ricard G."/>
            <person name="Gabaldon T."/>
            <person name="van Hoek A.H.A.M."/>
            <person name="Moon-van der Staay S.Y."/>
            <person name="Koopman W.J.H."/>
            <person name="van Hellemond J.J."/>
            <person name="Tielens A.G.M."/>
            <person name="Friedrich T."/>
            <person name="Veenhuis M."/>
            <person name="Huynen M.A."/>
            <person name="Hackstein J.H.P."/>
        </authorList>
    </citation>
    <scope>NUCLEOTIDE SEQUENCE [LARGE SCALE GENOMIC DNA]</scope>
</reference>
<keyword id="KW-0377">Hydrogenosome</keyword>
<keyword id="KW-0472">Membrane</keyword>
<keyword id="KW-0520">NAD</keyword>
<keyword id="KW-1278">Translocase</keyword>
<keyword id="KW-0812">Transmembrane</keyword>
<keyword id="KW-1133">Transmembrane helix</keyword>
<keyword id="KW-0830">Ubiquinone</keyword>
<organism>
    <name type="scientific">Nyctotherus ovalis</name>
    <dbReference type="NCBI Taxonomy" id="70075"/>
    <lineage>
        <taxon>Eukaryota</taxon>
        <taxon>Sar</taxon>
        <taxon>Alveolata</taxon>
        <taxon>Ciliophora</taxon>
        <taxon>Intramacronucleata</taxon>
        <taxon>Armophorea</taxon>
        <taxon>Clevelandellida</taxon>
        <taxon>Nyctotheridae</taxon>
        <taxon>Nyctotherus</taxon>
    </lineage>
</organism>
<protein>
    <recommendedName>
        <fullName>NADH-ubiquinone oxidoreductase chain 5</fullName>
        <ecNumber>7.1.1.2</ecNumber>
    </recommendedName>
    <alternativeName>
        <fullName>NADH dehydrogenase subunit 5</fullName>
    </alternativeName>
</protein>
<evidence type="ECO:0000255" key="1"/>
<evidence type="ECO:0000305" key="2"/>
<feature type="chain" id="PRO_0000118163" description="NADH-ubiquinone oxidoreductase chain 5">
    <location>
        <begin position="1"/>
        <end position="1849"/>
    </location>
</feature>
<feature type="transmembrane region" description="Helical" evidence="1">
    <location>
        <begin position="76"/>
        <end position="93"/>
    </location>
</feature>
<feature type="transmembrane region" description="Helical" evidence="1">
    <location>
        <begin position="98"/>
        <end position="120"/>
    </location>
</feature>
<feature type="transmembrane region" description="Helical" evidence="1">
    <location>
        <begin position="190"/>
        <end position="212"/>
    </location>
</feature>
<feature type="transmembrane region" description="Helical" evidence="1">
    <location>
        <begin position="222"/>
        <end position="244"/>
    </location>
</feature>
<feature type="transmembrane region" description="Helical" evidence="1">
    <location>
        <begin position="279"/>
        <end position="301"/>
    </location>
</feature>
<feature type="transmembrane region" description="Helical" evidence="1">
    <location>
        <begin position="316"/>
        <end position="338"/>
    </location>
</feature>
<feature type="transmembrane region" description="Helical" evidence="1">
    <location>
        <begin position="358"/>
        <end position="380"/>
    </location>
</feature>
<feature type="transmembrane region" description="Helical" evidence="1">
    <location>
        <begin position="390"/>
        <end position="412"/>
    </location>
</feature>
<feature type="transmembrane region" description="Helical" evidence="1">
    <location>
        <begin position="419"/>
        <end position="441"/>
    </location>
</feature>
<feature type="transmembrane region" description="Helical" evidence="1">
    <location>
        <begin position="483"/>
        <end position="505"/>
    </location>
</feature>
<feature type="transmembrane region" description="Helical" evidence="1">
    <location>
        <begin position="510"/>
        <end position="532"/>
    </location>
</feature>
<feature type="transmembrane region" description="Helical" evidence="1">
    <location>
        <begin position="536"/>
        <end position="558"/>
    </location>
</feature>
<feature type="transmembrane region" description="Helical" evidence="1">
    <location>
        <begin position="565"/>
        <end position="587"/>
    </location>
</feature>
<feature type="transmembrane region" description="Helical" evidence="1">
    <location>
        <begin position="621"/>
        <end position="640"/>
    </location>
</feature>
<feature type="transmembrane region" description="Helical" evidence="1">
    <location>
        <begin position="683"/>
        <end position="705"/>
    </location>
</feature>
<feature type="transmembrane region" description="Helical" evidence="1">
    <location>
        <begin position="718"/>
        <end position="740"/>
    </location>
</feature>
<feature type="transmembrane region" description="Helical" evidence="1">
    <location>
        <begin position="745"/>
        <end position="767"/>
    </location>
</feature>
<feature type="transmembrane region" description="Helical" evidence="1">
    <location>
        <begin position="797"/>
        <end position="819"/>
    </location>
</feature>
<feature type="transmembrane region" description="Helical" evidence="1">
    <location>
        <begin position="868"/>
        <end position="890"/>
    </location>
</feature>
<feature type="transmembrane region" description="Helical" evidence="1">
    <location>
        <begin position="905"/>
        <end position="927"/>
    </location>
</feature>
<feature type="transmembrane region" description="Helical" evidence="1">
    <location>
        <begin position="966"/>
        <end position="988"/>
    </location>
</feature>
<feature type="transmembrane region" description="Helical" evidence="1">
    <location>
        <begin position="1008"/>
        <end position="1030"/>
    </location>
</feature>
<feature type="transmembrane region" description="Helical" evidence="1">
    <location>
        <begin position="1073"/>
        <end position="1095"/>
    </location>
</feature>
<feature type="transmembrane region" description="Helical" evidence="1">
    <location>
        <begin position="1105"/>
        <end position="1127"/>
    </location>
</feature>
<feature type="transmembrane region" description="Helical" evidence="1">
    <location>
        <begin position="1172"/>
        <end position="1194"/>
    </location>
</feature>
<feature type="transmembrane region" description="Helical" evidence="1">
    <location>
        <begin position="1219"/>
        <end position="1241"/>
    </location>
</feature>
<feature type="transmembrane region" description="Helical" evidence="1">
    <location>
        <begin position="1248"/>
        <end position="1270"/>
    </location>
</feature>
<feature type="transmembrane region" description="Helical" evidence="1">
    <location>
        <begin position="1296"/>
        <end position="1318"/>
    </location>
</feature>
<feature type="transmembrane region" description="Helical" evidence="1">
    <location>
        <begin position="1330"/>
        <end position="1352"/>
    </location>
</feature>
<feature type="transmembrane region" description="Helical" evidence="1">
    <location>
        <begin position="1357"/>
        <end position="1379"/>
    </location>
</feature>
<feature type="transmembrane region" description="Helical" evidence="1">
    <location>
        <begin position="1418"/>
        <end position="1440"/>
    </location>
</feature>
<feature type="transmembrane region" description="Helical" evidence="1">
    <location>
        <begin position="1444"/>
        <end position="1466"/>
    </location>
</feature>
<feature type="transmembrane region" description="Helical" evidence="1">
    <location>
        <begin position="1478"/>
        <end position="1500"/>
    </location>
</feature>
<feature type="transmembrane region" description="Helical" evidence="1">
    <location>
        <begin position="1504"/>
        <end position="1526"/>
    </location>
</feature>
<feature type="transmembrane region" description="Helical" evidence="1">
    <location>
        <begin position="1533"/>
        <end position="1555"/>
    </location>
</feature>
<feature type="transmembrane region" description="Helical" evidence="1">
    <location>
        <begin position="1559"/>
        <end position="1581"/>
    </location>
</feature>
<feature type="transmembrane region" description="Helical" evidence="1">
    <location>
        <begin position="1602"/>
        <end position="1624"/>
    </location>
</feature>
<feature type="transmembrane region" description="Helical" evidence="1">
    <location>
        <begin position="1639"/>
        <end position="1661"/>
    </location>
</feature>
<feature type="transmembrane region" description="Helical" evidence="1">
    <location>
        <begin position="1719"/>
        <end position="1741"/>
    </location>
</feature>
<feature type="transmembrane region" description="Helical" evidence="1">
    <location>
        <begin position="1773"/>
        <end position="1795"/>
    </location>
</feature>
<feature type="transmembrane region" description="Helical" evidence="1">
    <location>
        <begin position="1802"/>
        <end position="1824"/>
    </location>
</feature>
<dbReference type="EC" id="7.1.1.2"/>
<dbReference type="EMBL" id="AJ871267">
    <property type="protein sequence ID" value="CAI38858.1"/>
    <property type="molecule type" value="Genomic_DNA"/>
</dbReference>
<dbReference type="SMR" id="Q5DUY0"/>
<dbReference type="GO" id="GO:0046859">
    <property type="term" value="C:hydrogenosomal membrane"/>
    <property type="evidence" value="ECO:0007669"/>
    <property type="project" value="UniProtKB-SubCell"/>
</dbReference>
<dbReference type="GO" id="GO:0008137">
    <property type="term" value="F:NADH dehydrogenase (ubiquinone) activity"/>
    <property type="evidence" value="ECO:0007669"/>
    <property type="project" value="UniProtKB-EC"/>
</dbReference>
<dbReference type="GO" id="GO:0042773">
    <property type="term" value="P:ATP synthesis coupled electron transport"/>
    <property type="evidence" value="ECO:0007669"/>
    <property type="project" value="InterPro"/>
</dbReference>
<dbReference type="GO" id="GO:0015990">
    <property type="term" value="P:electron transport coupled proton transport"/>
    <property type="evidence" value="ECO:0007669"/>
    <property type="project" value="TreeGrafter"/>
</dbReference>
<dbReference type="InterPro" id="IPR001750">
    <property type="entry name" value="ND/Mrp_TM"/>
</dbReference>
<dbReference type="InterPro" id="IPR003945">
    <property type="entry name" value="NU5C-like"/>
</dbReference>
<dbReference type="PANTHER" id="PTHR42829">
    <property type="entry name" value="NADH-UBIQUINONE OXIDOREDUCTASE CHAIN 5"/>
    <property type="match status" value="1"/>
</dbReference>
<dbReference type="PANTHER" id="PTHR42829:SF2">
    <property type="entry name" value="NADH-UBIQUINONE OXIDOREDUCTASE CHAIN 5"/>
    <property type="match status" value="1"/>
</dbReference>
<dbReference type="Pfam" id="PF00361">
    <property type="entry name" value="Proton_antipo_M"/>
    <property type="match status" value="1"/>
</dbReference>
<dbReference type="PRINTS" id="PR01434">
    <property type="entry name" value="NADHDHGNASE5"/>
</dbReference>
<name>NU5H_NYCOV</name>
<accession>Q5DUY0</accession>
<gene>
    <name type="primary">nad5</name>
</gene>